<feature type="chain" id="PRO_0000088290" description="3-phosphoshikimate 1-carboxyvinyltransferase">
    <location>
        <begin position="1"/>
        <end position="432"/>
    </location>
</feature>
<feature type="active site" description="Proton acceptor" evidence="1">
    <location>
        <position position="317"/>
    </location>
</feature>
<feature type="binding site" evidence="1">
    <location>
        <position position="23"/>
    </location>
    <ligand>
        <name>3-phosphoshikimate</name>
        <dbReference type="ChEBI" id="CHEBI:145989"/>
    </ligand>
</feature>
<feature type="binding site" evidence="1">
    <location>
        <position position="23"/>
    </location>
    <ligand>
        <name>phosphoenolpyruvate</name>
        <dbReference type="ChEBI" id="CHEBI:58702"/>
    </ligand>
</feature>
<feature type="binding site" evidence="1">
    <location>
        <position position="24"/>
    </location>
    <ligand>
        <name>3-phosphoshikimate</name>
        <dbReference type="ChEBI" id="CHEBI:145989"/>
    </ligand>
</feature>
<feature type="binding site" evidence="1">
    <location>
        <position position="28"/>
    </location>
    <ligand>
        <name>3-phosphoshikimate</name>
        <dbReference type="ChEBI" id="CHEBI:145989"/>
    </ligand>
</feature>
<feature type="binding site" evidence="1">
    <location>
        <position position="95"/>
    </location>
    <ligand>
        <name>phosphoenolpyruvate</name>
        <dbReference type="ChEBI" id="CHEBI:58702"/>
    </ligand>
</feature>
<feature type="binding site" evidence="1">
    <location>
        <position position="123"/>
    </location>
    <ligand>
        <name>phosphoenolpyruvate</name>
        <dbReference type="ChEBI" id="CHEBI:58702"/>
    </ligand>
</feature>
<feature type="binding site" evidence="1">
    <location>
        <position position="167"/>
    </location>
    <ligand>
        <name>3-phosphoshikimate</name>
        <dbReference type="ChEBI" id="CHEBI:145989"/>
    </ligand>
</feature>
<feature type="binding site" evidence="1">
    <location>
        <position position="169"/>
    </location>
    <ligand>
        <name>3-phosphoshikimate</name>
        <dbReference type="ChEBI" id="CHEBI:145989"/>
    </ligand>
</feature>
<feature type="binding site" evidence="1">
    <location>
        <position position="169"/>
    </location>
    <ligand>
        <name>phosphoenolpyruvate</name>
        <dbReference type="ChEBI" id="CHEBI:58702"/>
    </ligand>
</feature>
<feature type="binding site" evidence="1">
    <location>
        <position position="317"/>
    </location>
    <ligand>
        <name>3-phosphoshikimate</name>
        <dbReference type="ChEBI" id="CHEBI:145989"/>
    </ligand>
</feature>
<feature type="binding site" evidence="1">
    <location>
        <position position="344"/>
    </location>
    <ligand>
        <name>3-phosphoshikimate</name>
        <dbReference type="ChEBI" id="CHEBI:145989"/>
    </ligand>
</feature>
<feature type="binding site" evidence="1">
    <location>
        <position position="348"/>
    </location>
    <ligand>
        <name>phosphoenolpyruvate</name>
        <dbReference type="ChEBI" id="CHEBI:58702"/>
    </ligand>
</feature>
<feature type="binding site" evidence="1">
    <location>
        <position position="390"/>
    </location>
    <ligand>
        <name>phosphoenolpyruvate</name>
        <dbReference type="ChEBI" id="CHEBI:58702"/>
    </ligand>
</feature>
<evidence type="ECO:0000255" key="1">
    <source>
        <dbReference type="HAMAP-Rule" id="MF_00210"/>
    </source>
</evidence>
<organism>
    <name type="scientific">Staphylococcus aureus (strain COL)</name>
    <dbReference type="NCBI Taxonomy" id="93062"/>
    <lineage>
        <taxon>Bacteria</taxon>
        <taxon>Bacillati</taxon>
        <taxon>Bacillota</taxon>
        <taxon>Bacilli</taxon>
        <taxon>Bacillales</taxon>
        <taxon>Staphylococcaceae</taxon>
        <taxon>Staphylococcus</taxon>
    </lineage>
</organism>
<protein>
    <recommendedName>
        <fullName evidence="1">3-phosphoshikimate 1-carboxyvinyltransferase</fullName>
        <ecNumber evidence="1">2.5.1.19</ecNumber>
    </recommendedName>
    <alternativeName>
        <fullName evidence="1">5-enolpyruvylshikimate-3-phosphate synthase</fullName>
        <shortName evidence="1">EPSP synthase</shortName>
        <shortName evidence="1">EPSPS</shortName>
    </alternativeName>
</protein>
<gene>
    <name evidence="1" type="primary">aroA</name>
    <name type="ordered locus">SACOL1504</name>
</gene>
<name>AROA_STAAC</name>
<comment type="function">
    <text evidence="1">Catalyzes the transfer of the enolpyruvyl moiety of phosphoenolpyruvate (PEP) to the 5-hydroxyl of shikimate-3-phosphate (S3P) to produce enolpyruvyl shikimate-3-phosphate and inorganic phosphate.</text>
</comment>
<comment type="catalytic activity">
    <reaction evidence="1">
        <text>3-phosphoshikimate + phosphoenolpyruvate = 5-O-(1-carboxyvinyl)-3-phosphoshikimate + phosphate</text>
        <dbReference type="Rhea" id="RHEA:21256"/>
        <dbReference type="ChEBI" id="CHEBI:43474"/>
        <dbReference type="ChEBI" id="CHEBI:57701"/>
        <dbReference type="ChEBI" id="CHEBI:58702"/>
        <dbReference type="ChEBI" id="CHEBI:145989"/>
        <dbReference type="EC" id="2.5.1.19"/>
    </reaction>
    <physiologicalReaction direction="left-to-right" evidence="1">
        <dbReference type="Rhea" id="RHEA:21257"/>
    </physiologicalReaction>
</comment>
<comment type="pathway">
    <text evidence="1">Metabolic intermediate biosynthesis; chorismate biosynthesis; chorismate from D-erythrose 4-phosphate and phosphoenolpyruvate: step 6/7.</text>
</comment>
<comment type="subunit">
    <text evidence="1">Monomer.</text>
</comment>
<comment type="subcellular location">
    <subcellularLocation>
        <location evidence="1">Cytoplasm</location>
    </subcellularLocation>
</comment>
<comment type="similarity">
    <text evidence="1">Belongs to the EPSP synthase family.</text>
</comment>
<keyword id="KW-0028">Amino-acid biosynthesis</keyword>
<keyword id="KW-0057">Aromatic amino acid biosynthesis</keyword>
<keyword id="KW-0963">Cytoplasm</keyword>
<keyword id="KW-0808">Transferase</keyword>
<accession>Q5HFV9</accession>
<sequence>MVNEQIIDISGPLKGEIEVPGDKSMTHRAIMLASLAEGVSTIYKPLLGEDCRRTMDIFRLLGVEIKEDDEKLVVTSPGYQSFNTPHQVLYTGNSGTTTRLLAGLLSGLGIESVLSGDVSIGKRPMDRVLRPLKLMDANIEGIEDNYTPLIIKPSVIKGINYQMEVASAQVKSAILFASLFSKEPTIIKELDVSRNHTETMFKHFNIPIEAEGLSINTTPEAIRYIKPADFHVPGDISSAAFFIVAALITPGSDVTIHNVGINPTRSGIIDIVEKMGGNIQLFNQTTGAEPTASIRIQYTPMLQPITIEGELVPKAIDELPVIALLCTQAVGTSTIKDAEELKVKETNRIDTTADMLNLLGFELQPTNDGLIIYPSEFKTNATVDSLTDHRIGMMLAVASLLSSEPVKIKQFDAVNVSFPGFLPKLKLLENEG</sequence>
<reference key="1">
    <citation type="journal article" date="2005" name="J. Bacteriol.">
        <title>Insights on evolution of virulence and resistance from the complete genome analysis of an early methicillin-resistant Staphylococcus aureus strain and a biofilm-producing methicillin-resistant Staphylococcus epidermidis strain.</title>
        <authorList>
            <person name="Gill S.R."/>
            <person name="Fouts D.E."/>
            <person name="Archer G.L."/>
            <person name="Mongodin E.F."/>
            <person name="DeBoy R.T."/>
            <person name="Ravel J."/>
            <person name="Paulsen I.T."/>
            <person name="Kolonay J.F."/>
            <person name="Brinkac L.M."/>
            <person name="Beanan M.J."/>
            <person name="Dodson R.J."/>
            <person name="Daugherty S.C."/>
            <person name="Madupu R."/>
            <person name="Angiuoli S.V."/>
            <person name="Durkin A.S."/>
            <person name="Haft D.H."/>
            <person name="Vamathevan J.J."/>
            <person name="Khouri H."/>
            <person name="Utterback T.R."/>
            <person name="Lee C."/>
            <person name="Dimitrov G."/>
            <person name="Jiang L."/>
            <person name="Qin H."/>
            <person name="Weidman J."/>
            <person name="Tran K."/>
            <person name="Kang K.H."/>
            <person name="Hance I.R."/>
            <person name="Nelson K.E."/>
            <person name="Fraser C.M."/>
        </authorList>
    </citation>
    <scope>NUCLEOTIDE SEQUENCE [LARGE SCALE GENOMIC DNA]</scope>
    <source>
        <strain>COL</strain>
    </source>
</reference>
<dbReference type="EC" id="2.5.1.19" evidence="1"/>
<dbReference type="EMBL" id="CP000046">
    <property type="protein sequence ID" value="AAW36699.1"/>
    <property type="molecule type" value="Genomic_DNA"/>
</dbReference>
<dbReference type="RefSeq" id="WP_000245896.1">
    <property type="nucleotide sequence ID" value="NC_002951.2"/>
</dbReference>
<dbReference type="SMR" id="Q5HFV9"/>
<dbReference type="KEGG" id="sac:SACOL1504"/>
<dbReference type="HOGENOM" id="CLU_024321_0_1_9"/>
<dbReference type="UniPathway" id="UPA00053">
    <property type="reaction ID" value="UER00089"/>
</dbReference>
<dbReference type="Proteomes" id="UP000000530">
    <property type="component" value="Chromosome"/>
</dbReference>
<dbReference type="GO" id="GO:0005737">
    <property type="term" value="C:cytoplasm"/>
    <property type="evidence" value="ECO:0007669"/>
    <property type="project" value="UniProtKB-SubCell"/>
</dbReference>
<dbReference type="GO" id="GO:0003866">
    <property type="term" value="F:3-phosphoshikimate 1-carboxyvinyltransferase activity"/>
    <property type="evidence" value="ECO:0007669"/>
    <property type="project" value="UniProtKB-UniRule"/>
</dbReference>
<dbReference type="GO" id="GO:0008652">
    <property type="term" value="P:amino acid biosynthetic process"/>
    <property type="evidence" value="ECO:0007669"/>
    <property type="project" value="UniProtKB-KW"/>
</dbReference>
<dbReference type="GO" id="GO:0009073">
    <property type="term" value="P:aromatic amino acid family biosynthetic process"/>
    <property type="evidence" value="ECO:0007669"/>
    <property type="project" value="UniProtKB-KW"/>
</dbReference>
<dbReference type="GO" id="GO:0009423">
    <property type="term" value="P:chorismate biosynthetic process"/>
    <property type="evidence" value="ECO:0007669"/>
    <property type="project" value="UniProtKB-UniRule"/>
</dbReference>
<dbReference type="CDD" id="cd01556">
    <property type="entry name" value="EPSP_synthase"/>
    <property type="match status" value="1"/>
</dbReference>
<dbReference type="FunFam" id="3.65.10.10:FF:000005">
    <property type="entry name" value="3-phosphoshikimate 1-carboxyvinyltransferase"/>
    <property type="match status" value="1"/>
</dbReference>
<dbReference type="FunFam" id="3.65.10.10:FF:000006">
    <property type="entry name" value="3-phosphoshikimate 1-carboxyvinyltransferase"/>
    <property type="match status" value="1"/>
</dbReference>
<dbReference type="Gene3D" id="3.65.10.10">
    <property type="entry name" value="Enolpyruvate transferase domain"/>
    <property type="match status" value="2"/>
</dbReference>
<dbReference type="HAMAP" id="MF_00210">
    <property type="entry name" value="EPSP_synth"/>
    <property type="match status" value="1"/>
</dbReference>
<dbReference type="InterPro" id="IPR001986">
    <property type="entry name" value="Enolpyruvate_Tfrase_dom"/>
</dbReference>
<dbReference type="InterPro" id="IPR036968">
    <property type="entry name" value="Enolpyruvate_Tfrase_sf"/>
</dbReference>
<dbReference type="InterPro" id="IPR006264">
    <property type="entry name" value="EPSP_synthase"/>
</dbReference>
<dbReference type="InterPro" id="IPR023193">
    <property type="entry name" value="EPSP_synthase_CS"/>
</dbReference>
<dbReference type="InterPro" id="IPR013792">
    <property type="entry name" value="RNA3'P_cycl/enolpyr_Trfase_a/b"/>
</dbReference>
<dbReference type="NCBIfam" id="TIGR01356">
    <property type="entry name" value="aroA"/>
    <property type="match status" value="1"/>
</dbReference>
<dbReference type="PANTHER" id="PTHR21090">
    <property type="entry name" value="AROM/DEHYDROQUINATE SYNTHASE"/>
    <property type="match status" value="1"/>
</dbReference>
<dbReference type="PANTHER" id="PTHR21090:SF5">
    <property type="entry name" value="PENTAFUNCTIONAL AROM POLYPEPTIDE"/>
    <property type="match status" value="1"/>
</dbReference>
<dbReference type="Pfam" id="PF00275">
    <property type="entry name" value="EPSP_synthase"/>
    <property type="match status" value="1"/>
</dbReference>
<dbReference type="PIRSF" id="PIRSF000505">
    <property type="entry name" value="EPSPS"/>
    <property type="match status" value="1"/>
</dbReference>
<dbReference type="SUPFAM" id="SSF55205">
    <property type="entry name" value="EPT/RTPC-like"/>
    <property type="match status" value="1"/>
</dbReference>
<dbReference type="PROSITE" id="PS00104">
    <property type="entry name" value="EPSP_SYNTHASE_1"/>
    <property type="match status" value="1"/>
</dbReference>
<dbReference type="PROSITE" id="PS00885">
    <property type="entry name" value="EPSP_SYNTHASE_2"/>
    <property type="match status" value="1"/>
</dbReference>
<proteinExistence type="inferred from homology"/>